<keyword id="KW-0378">Hydrolase</keyword>
<keyword id="KW-1185">Reference proteome</keyword>
<keyword id="KW-0833">Ubl conjugation pathway</keyword>
<accession>Q8GYW0</accession>
<organism>
    <name type="scientific">Arabidopsis thaliana</name>
    <name type="common">Mouse-ear cress</name>
    <dbReference type="NCBI Taxonomy" id="3702"/>
    <lineage>
        <taxon>Eukaryota</taxon>
        <taxon>Viridiplantae</taxon>
        <taxon>Streptophyta</taxon>
        <taxon>Embryophyta</taxon>
        <taxon>Tracheophyta</taxon>
        <taxon>Spermatophyta</taxon>
        <taxon>Magnoliopsida</taxon>
        <taxon>eudicotyledons</taxon>
        <taxon>Gunneridae</taxon>
        <taxon>Pentapetalae</taxon>
        <taxon>rosids</taxon>
        <taxon>malvids</taxon>
        <taxon>Brassicales</taxon>
        <taxon>Brassicaceae</taxon>
        <taxon>Camelineae</taxon>
        <taxon>Arabidopsis</taxon>
    </lineage>
</organism>
<proteinExistence type="evidence at protein level"/>
<sequence length="234" mass="26273">MELKSSSNNNILEQLRNGFARFELVSSPTASVSDSISSTSLPASFISTTKGNSYVFFARINSSMNRSPAAKKVEKYAVDRVKGDGRCLFRALVKGMAFNKGITLNPQRERDDADELRMAVKEVICNDPKEREKYKEALVAITVDESLKRFCQRIGRHDFWGGESELLVLSKLCKQPIIVYIPEHEHGRGGGYGPGFIPIQEYGSEFRGGWGKGKTNKNVVRLLYSGRNHYDLLR</sequence>
<gene>
    <name evidence="6" type="primary">OTU3</name>
    <name evidence="8" type="ordered locus">At2g38025</name>
</gene>
<comment type="function">
    <text evidence="5">Hydrolase that can remove conjugated ubiquitin from proteins in vitro and may therefore play an important regulatory role at the level of protein turnover by preventing degradation (PubMed:24659992). Cysteine protease with a preference for 'Lys-63' over 'Lys-48' over 'Met-1' -linked ubiquitin (UB) tetramers (e.g. Ub3 and Ub4) as substrates (PubMed:24659992). Also cleaves RUB-GST fusion (PubMed:24659992).</text>
</comment>
<comment type="catalytic activity">
    <reaction evidence="5">
        <text>Thiol-dependent hydrolysis of ester, thioester, amide, peptide and isopeptide bonds formed by the C-terminal Gly of ubiquitin (a 76-residue protein attached to proteins as an intracellular targeting signal).</text>
        <dbReference type="EC" id="3.4.19.12"/>
    </reaction>
</comment>
<comment type="biophysicochemical properties">
    <phDependence>
        <text evidence="5">Optimum pH is 7.</text>
    </phDependence>
</comment>
<comment type="similarity">
    <text evidence="7">Belongs to the peptidase C85 family.</text>
</comment>
<dbReference type="EC" id="3.4.19.12" evidence="5"/>
<dbReference type="EMBL" id="JQ013444">
    <property type="protein sequence ID" value="AFS88947.1"/>
    <property type="molecule type" value="mRNA"/>
</dbReference>
<dbReference type="EMBL" id="LR215053">
    <property type="status" value="NOT_ANNOTATED_CDS"/>
    <property type="molecule type" value="Genomic_DNA"/>
</dbReference>
<dbReference type="EMBL" id="CP002685">
    <property type="protein sequence ID" value="AEC09481.1"/>
    <property type="molecule type" value="Genomic_DNA"/>
</dbReference>
<dbReference type="EMBL" id="AK117356">
    <property type="protein sequence ID" value="BAC42026.1"/>
    <property type="molecule type" value="mRNA"/>
</dbReference>
<dbReference type="EMBL" id="BT005253">
    <property type="protein sequence ID" value="AAO63317.1"/>
    <property type="molecule type" value="mRNA"/>
</dbReference>
<dbReference type="RefSeq" id="NP_850290.1">
    <property type="nucleotide sequence ID" value="NM_179959.4"/>
</dbReference>
<dbReference type="SMR" id="Q8GYW0"/>
<dbReference type="FunCoup" id="Q8GYW0">
    <property type="interactions" value="1591"/>
</dbReference>
<dbReference type="STRING" id="3702.Q8GYW0"/>
<dbReference type="PaxDb" id="3702-AT2G38025.1"/>
<dbReference type="ProteomicsDB" id="183108"/>
<dbReference type="EnsemblPlants" id="AT2G38025.1">
    <property type="protein sequence ID" value="AT2G38025.1"/>
    <property type="gene ID" value="AT2G38025"/>
</dbReference>
<dbReference type="GeneID" id="818381"/>
<dbReference type="Gramene" id="AT2G38025.1">
    <property type="protein sequence ID" value="AT2G38025.1"/>
    <property type="gene ID" value="AT2G38025"/>
</dbReference>
<dbReference type="KEGG" id="ath:AT2G38025"/>
<dbReference type="Araport" id="AT2G38025"/>
<dbReference type="TAIR" id="AT2G38025">
    <property type="gene designation" value="OTU3"/>
</dbReference>
<dbReference type="eggNOG" id="ENOG502QS0W">
    <property type="taxonomic scope" value="Eukaryota"/>
</dbReference>
<dbReference type="HOGENOM" id="CLU_082874_0_0_1"/>
<dbReference type="InParanoid" id="Q8GYW0"/>
<dbReference type="OMA" id="EVICDND"/>
<dbReference type="PhylomeDB" id="Q8GYW0"/>
<dbReference type="PRO" id="PR:Q8GYW0"/>
<dbReference type="Proteomes" id="UP000006548">
    <property type="component" value="Chromosome 2"/>
</dbReference>
<dbReference type="ExpressionAtlas" id="Q8GYW0">
    <property type="expression patterns" value="baseline and differential"/>
</dbReference>
<dbReference type="GO" id="GO:0004843">
    <property type="term" value="F:cysteine-type deubiquitinase activity"/>
    <property type="evidence" value="ECO:0007669"/>
    <property type="project" value="UniProtKB-EC"/>
</dbReference>
<dbReference type="CDD" id="cd22759">
    <property type="entry name" value="OTU_plant_OTU3-like"/>
    <property type="match status" value="1"/>
</dbReference>
<dbReference type="FunFam" id="3.90.70.80:FF:000019">
    <property type="entry name" value="Cysteine proteinases superfamily protein"/>
    <property type="match status" value="1"/>
</dbReference>
<dbReference type="Gene3D" id="3.90.70.80">
    <property type="match status" value="1"/>
</dbReference>
<dbReference type="InterPro" id="IPR003323">
    <property type="entry name" value="OTU_dom"/>
</dbReference>
<dbReference type="InterPro" id="IPR038765">
    <property type="entry name" value="Papain-like_cys_pep_sf"/>
</dbReference>
<dbReference type="PANTHER" id="PTHR13312">
    <property type="entry name" value="HIV-INDUCED PROTEIN-7-LIKE PROTEASE"/>
    <property type="match status" value="1"/>
</dbReference>
<dbReference type="PANTHER" id="PTHR13312:SF3">
    <property type="entry name" value="OVARIAN TUMOR DOMAIN-CONTAINING DEUBIQUITINATING ENZYME 3"/>
    <property type="match status" value="1"/>
</dbReference>
<dbReference type="Pfam" id="PF02338">
    <property type="entry name" value="OTU"/>
    <property type="match status" value="1"/>
</dbReference>
<dbReference type="SUPFAM" id="SSF54001">
    <property type="entry name" value="Cysteine proteinases"/>
    <property type="match status" value="1"/>
</dbReference>
<dbReference type="PROSITE" id="PS50802">
    <property type="entry name" value="OTU"/>
    <property type="match status" value="1"/>
</dbReference>
<evidence type="ECO:0000250" key="1">
    <source>
        <dbReference type="UniProtKB" id="Q96G74"/>
    </source>
</evidence>
<evidence type="ECO:0000250" key="2">
    <source>
        <dbReference type="UniProtKB" id="Q9XIP2"/>
    </source>
</evidence>
<evidence type="ECO:0000255" key="3"/>
<evidence type="ECO:0000255" key="4">
    <source>
        <dbReference type="PROSITE-ProRule" id="PRU00139"/>
    </source>
</evidence>
<evidence type="ECO:0000269" key="5">
    <source>
    </source>
</evidence>
<evidence type="ECO:0000303" key="6">
    <source>
    </source>
</evidence>
<evidence type="ECO:0000305" key="7"/>
<evidence type="ECO:0000312" key="8">
    <source>
        <dbReference type="Araport" id="AT2G38025"/>
    </source>
</evidence>
<feature type="chain" id="PRO_0000447754" description="OVARIAN TUMOR DOMAIN-containing deubiquitinating enzyme 3">
    <location>
        <begin position="1"/>
        <end position="234"/>
    </location>
</feature>
<feature type="domain" description="OTU" evidence="4">
    <location>
        <begin position="76"/>
        <end position="234"/>
    </location>
</feature>
<feature type="region of interest" description="Cys-loop" evidence="2">
    <location>
        <begin position="81"/>
        <end position="87"/>
    </location>
</feature>
<feature type="region of interest" description="Variable-loop" evidence="2">
    <location>
        <begin position="154"/>
        <end position="164"/>
    </location>
</feature>
<feature type="region of interest" description="His-loop" evidence="2">
    <location>
        <begin position="224"/>
        <end position="229"/>
    </location>
</feature>
<feature type="active site" evidence="3">
    <location>
        <position position="84"/>
    </location>
</feature>
<feature type="active site" description="Nucleophile" evidence="1">
    <location>
        <position position="87"/>
    </location>
</feature>
<feature type="active site" evidence="1">
    <location>
        <position position="229"/>
    </location>
</feature>
<name>OTU3_ARATH</name>
<protein>
    <recommendedName>
        <fullName evidence="6">OVARIAN TUMOR DOMAIN-containing deubiquitinating enzyme 3</fullName>
        <shortName evidence="6">OTU domain-containing protein 3</shortName>
        <ecNumber evidence="5">3.4.19.12</ecNumber>
    </recommendedName>
    <alternativeName>
        <fullName evidence="6">Deubiquitinating enzyme OTU3</fullName>
    </alternativeName>
</protein>
<reference key="1">
    <citation type="journal article" date="2014" name="Front. Plant Sci.">
        <title>Distinct phylogenetic relationships and biochemical properties of Arabidopsis ovarian tumor-related deubiquitinases support their functional differentiation.</title>
        <authorList>
            <person name="Radjacommare R."/>
            <person name="Usharani R."/>
            <person name="Kuo C.-H."/>
            <person name="Fu H."/>
        </authorList>
    </citation>
    <scope>NUCLEOTIDE SEQUENCE [MRNA]</scope>
    <scope>FUNCTION</scope>
    <scope>BIOPHYSICOCHEMICAL PROPERTIES</scope>
    <scope>CATALYTIC ACTIVITY</scope>
    <scope>GENE FAMILY</scope>
    <scope>NOMENCLATURE</scope>
    <source>
        <strain>cv. Columbia</strain>
    </source>
</reference>
<reference key="2">
    <citation type="journal article" date="1999" name="Nature">
        <title>Sequence and analysis of chromosome 2 of the plant Arabidopsis thaliana.</title>
        <authorList>
            <person name="Lin X."/>
            <person name="Kaul S."/>
            <person name="Rounsley S.D."/>
            <person name="Shea T.P."/>
            <person name="Benito M.-I."/>
            <person name="Town C.D."/>
            <person name="Fujii C.Y."/>
            <person name="Mason T.M."/>
            <person name="Bowman C.L."/>
            <person name="Barnstead M.E."/>
            <person name="Feldblyum T.V."/>
            <person name="Buell C.R."/>
            <person name="Ketchum K.A."/>
            <person name="Lee J.J."/>
            <person name="Ronning C.M."/>
            <person name="Koo H.L."/>
            <person name="Moffat K.S."/>
            <person name="Cronin L.A."/>
            <person name="Shen M."/>
            <person name="Pai G."/>
            <person name="Van Aken S."/>
            <person name="Umayam L."/>
            <person name="Tallon L.J."/>
            <person name="Gill J.E."/>
            <person name="Adams M.D."/>
            <person name="Carrera A.J."/>
            <person name="Creasy T.H."/>
            <person name="Goodman H.M."/>
            <person name="Somerville C.R."/>
            <person name="Copenhaver G.P."/>
            <person name="Preuss D."/>
            <person name="Nierman W.C."/>
            <person name="White O."/>
            <person name="Eisen J.A."/>
            <person name="Salzberg S.L."/>
            <person name="Fraser C.M."/>
            <person name="Venter J.C."/>
        </authorList>
    </citation>
    <scope>NUCLEOTIDE SEQUENCE [LARGE SCALE GENOMIC DNA]</scope>
    <source>
        <strain>cv. Columbia</strain>
    </source>
</reference>
<reference key="3">
    <citation type="journal article" date="2017" name="Plant J.">
        <title>Araport11: a complete reannotation of the Arabidopsis thaliana reference genome.</title>
        <authorList>
            <person name="Cheng C.Y."/>
            <person name="Krishnakumar V."/>
            <person name="Chan A.P."/>
            <person name="Thibaud-Nissen F."/>
            <person name="Schobel S."/>
            <person name="Town C.D."/>
        </authorList>
    </citation>
    <scope>GENOME REANNOTATION</scope>
    <source>
        <strain>cv. Columbia</strain>
    </source>
</reference>
<reference key="4">
    <citation type="journal article" date="2002" name="Science">
        <title>Functional annotation of a full-length Arabidopsis cDNA collection.</title>
        <authorList>
            <person name="Seki M."/>
            <person name="Narusaka M."/>
            <person name="Kamiya A."/>
            <person name="Ishida J."/>
            <person name="Satou M."/>
            <person name="Sakurai T."/>
            <person name="Nakajima M."/>
            <person name="Enju A."/>
            <person name="Akiyama K."/>
            <person name="Oono Y."/>
            <person name="Muramatsu M."/>
            <person name="Hayashizaki Y."/>
            <person name="Kawai J."/>
            <person name="Carninci P."/>
            <person name="Itoh M."/>
            <person name="Ishii Y."/>
            <person name="Arakawa T."/>
            <person name="Shibata K."/>
            <person name="Shinagawa A."/>
            <person name="Shinozaki K."/>
        </authorList>
    </citation>
    <scope>NUCLEOTIDE SEQUENCE [LARGE SCALE MRNA]</scope>
    <source>
        <strain>cv. Columbia</strain>
    </source>
</reference>
<reference key="5">
    <citation type="journal article" date="2003" name="Science">
        <title>Empirical analysis of transcriptional activity in the Arabidopsis genome.</title>
        <authorList>
            <person name="Yamada K."/>
            <person name="Lim J."/>
            <person name="Dale J.M."/>
            <person name="Chen H."/>
            <person name="Shinn P."/>
            <person name="Palm C.J."/>
            <person name="Southwick A.M."/>
            <person name="Wu H.C."/>
            <person name="Kim C.J."/>
            <person name="Nguyen M."/>
            <person name="Pham P.K."/>
            <person name="Cheuk R.F."/>
            <person name="Karlin-Newmann G."/>
            <person name="Liu S.X."/>
            <person name="Lam B."/>
            <person name="Sakano H."/>
            <person name="Wu T."/>
            <person name="Yu G."/>
            <person name="Miranda M."/>
            <person name="Quach H.L."/>
            <person name="Tripp M."/>
            <person name="Chang C.H."/>
            <person name="Lee J.M."/>
            <person name="Toriumi M.J."/>
            <person name="Chan M.M."/>
            <person name="Tang C.C."/>
            <person name="Onodera C.S."/>
            <person name="Deng J.M."/>
            <person name="Akiyama K."/>
            <person name="Ansari Y."/>
            <person name="Arakawa T."/>
            <person name="Banh J."/>
            <person name="Banno F."/>
            <person name="Bowser L."/>
            <person name="Brooks S.Y."/>
            <person name="Carninci P."/>
            <person name="Chao Q."/>
            <person name="Choy N."/>
            <person name="Enju A."/>
            <person name="Goldsmith A.D."/>
            <person name="Gurjal M."/>
            <person name="Hansen N.F."/>
            <person name="Hayashizaki Y."/>
            <person name="Johnson-Hopson C."/>
            <person name="Hsuan V.W."/>
            <person name="Iida K."/>
            <person name="Karnes M."/>
            <person name="Khan S."/>
            <person name="Koesema E."/>
            <person name="Ishida J."/>
            <person name="Jiang P.X."/>
            <person name="Jones T."/>
            <person name="Kawai J."/>
            <person name="Kamiya A."/>
            <person name="Meyers C."/>
            <person name="Nakajima M."/>
            <person name="Narusaka M."/>
            <person name="Seki M."/>
            <person name="Sakurai T."/>
            <person name="Satou M."/>
            <person name="Tamse R."/>
            <person name="Vaysberg M."/>
            <person name="Wallender E.K."/>
            <person name="Wong C."/>
            <person name="Yamamura Y."/>
            <person name="Yuan S."/>
            <person name="Shinozaki K."/>
            <person name="Davis R.W."/>
            <person name="Theologis A."/>
            <person name="Ecker J.R."/>
        </authorList>
    </citation>
    <scope>NUCLEOTIDE SEQUENCE [LARGE SCALE MRNA]</scope>
    <source>
        <strain>cv. Columbia</strain>
    </source>
</reference>